<proteinExistence type="evidence at transcript level"/>
<organism>
    <name type="scientific">Mus musculus</name>
    <name type="common">Mouse</name>
    <dbReference type="NCBI Taxonomy" id="10090"/>
    <lineage>
        <taxon>Eukaryota</taxon>
        <taxon>Metazoa</taxon>
        <taxon>Chordata</taxon>
        <taxon>Craniata</taxon>
        <taxon>Vertebrata</taxon>
        <taxon>Euteleostomi</taxon>
        <taxon>Mammalia</taxon>
        <taxon>Eutheria</taxon>
        <taxon>Euarchontoglires</taxon>
        <taxon>Glires</taxon>
        <taxon>Rodentia</taxon>
        <taxon>Myomorpha</taxon>
        <taxon>Muroidea</taxon>
        <taxon>Muridae</taxon>
        <taxon>Murinae</taxon>
        <taxon>Mus</taxon>
        <taxon>Mus</taxon>
    </lineage>
</organism>
<accession>Q9DC60</accession>
<accession>A2AH70</accession>
<accession>B2KFZ5</accession>
<accession>Q6IR30</accession>
<accession>Q8BJX7</accession>
<reference key="1">
    <citation type="journal article" date="2005" name="Science">
        <title>The transcriptional landscape of the mammalian genome.</title>
        <authorList>
            <person name="Carninci P."/>
            <person name="Kasukawa T."/>
            <person name="Katayama S."/>
            <person name="Gough J."/>
            <person name="Frith M.C."/>
            <person name="Maeda N."/>
            <person name="Oyama R."/>
            <person name="Ravasi T."/>
            <person name="Lenhard B."/>
            <person name="Wells C."/>
            <person name="Kodzius R."/>
            <person name="Shimokawa K."/>
            <person name="Bajic V.B."/>
            <person name="Brenner S.E."/>
            <person name="Batalov S."/>
            <person name="Forrest A.R."/>
            <person name="Zavolan M."/>
            <person name="Davis M.J."/>
            <person name="Wilming L.G."/>
            <person name="Aidinis V."/>
            <person name="Allen J.E."/>
            <person name="Ambesi-Impiombato A."/>
            <person name="Apweiler R."/>
            <person name="Aturaliya R.N."/>
            <person name="Bailey T.L."/>
            <person name="Bansal M."/>
            <person name="Baxter L."/>
            <person name="Beisel K.W."/>
            <person name="Bersano T."/>
            <person name="Bono H."/>
            <person name="Chalk A.M."/>
            <person name="Chiu K.P."/>
            <person name="Choudhary V."/>
            <person name="Christoffels A."/>
            <person name="Clutterbuck D.R."/>
            <person name="Crowe M.L."/>
            <person name="Dalla E."/>
            <person name="Dalrymple B.P."/>
            <person name="de Bono B."/>
            <person name="Della Gatta G."/>
            <person name="di Bernardo D."/>
            <person name="Down T."/>
            <person name="Engstrom P."/>
            <person name="Fagiolini M."/>
            <person name="Faulkner G."/>
            <person name="Fletcher C.F."/>
            <person name="Fukushima T."/>
            <person name="Furuno M."/>
            <person name="Futaki S."/>
            <person name="Gariboldi M."/>
            <person name="Georgii-Hemming P."/>
            <person name="Gingeras T.R."/>
            <person name="Gojobori T."/>
            <person name="Green R.E."/>
            <person name="Gustincich S."/>
            <person name="Harbers M."/>
            <person name="Hayashi Y."/>
            <person name="Hensch T.K."/>
            <person name="Hirokawa N."/>
            <person name="Hill D."/>
            <person name="Huminiecki L."/>
            <person name="Iacono M."/>
            <person name="Ikeo K."/>
            <person name="Iwama A."/>
            <person name="Ishikawa T."/>
            <person name="Jakt M."/>
            <person name="Kanapin A."/>
            <person name="Katoh M."/>
            <person name="Kawasawa Y."/>
            <person name="Kelso J."/>
            <person name="Kitamura H."/>
            <person name="Kitano H."/>
            <person name="Kollias G."/>
            <person name="Krishnan S.P."/>
            <person name="Kruger A."/>
            <person name="Kummerfeld S.K."/>
            <person name="Kurochkin I.V."/>
            <person name="Lareau L.F."/>
            <person name="Lazarevic D."/>
            <person name="Lipovich L."/>
            <person name="Liu J."/>
            <person name="Liuni S."/>
            <person name="McWilliam S."/>
            <person name="Madan Babu M."/>
            <person name="Madera M."/>
            <person name="Marchionni L."/>
            <person name="Matsuda H."/>
            <person name="Matsuzawa S."/>
            <person name="Miki H."/>
            <person name="Mignone F."/>
            <person name="Miyake S."/>
            <person name="Morris K."/>
            <person name="Mottagui-Tabar S."/>
            <person name="Mulder N."/>
            <person name="Nakano N."/>
            <person name="Nakauchi H."/>
            <person name="Ng P."/>
            <person name="Nilsson R."/>
            <person name="Nishiguchi S."/>
            <person name="Nishikawa S."/>
            <person name="Nori F."/>
            <person name="Ohara O."/>
            <person name="Okazaki Y."/>
            <person name="Orlando V."/>
            <person name="Pang K.C."/>
            <person name="Pavan W.J."/>
            <person name="Pavesi G."/>
            <person name="Pesole G."/>
            <person name="Petrovsky N."/>
            <person name="Piazza S."/>
            <person name="Reed J."/>
            <person name="Reid J.F."/>
            <person name="Ring B.Z."/>
            <person name="Ringwald M."/>
            <person name="Rost B."/>
            <person name="Ruan Y."/>
            <person name="Salzberg S.L."/>
            <person name="Sandelin A."/>
            <person name="Schneider C."/>
            <person name="Schoenbach C."/>
            <person name="Sekiguchi K."/>
            <person name="Semple C.A."/>
            <person name="Seno S."/>
            <person name="Sessa L."/>
            <person name="Sheng Y."/>
            <person name="Shibata Y."/>
            <person name="Shimada H."/>
            <person name="Shimada K."/>
            <person name="Silva D."/>
            <person name="Sinclair B."/>
            <person name="Sperling S."/>
            <person name="Stupka E."/>
            <person name="Sugiura K."/>
            <person name="Sultana R."/>
            <person name="Takenaka Y."/>
            <person name="Taki K."/>
            <person name="Tammoja K."/>
            <person name="Tan S.L."/>
            <person name="Tang S."/>
            <person name="Taylor M.S."/>
            <person name="Tegner J."/>
            <person name="Teichmann S.A."/>
            <person name="Ueda H.R."/>
            <person name="van Nimwegen E."/>
            <person name="Verardo R."/>
            <person name="Wei C.L."/>
            <person name="Yagi K."/>
            <person name="Yamanishi H."/>
            <person name="Zabarovsky E."/>
            <person name="Zhu S."/>
            <person name="Zimmer A."/>
            <person name="Hide W."/>
            <person name="Bult C."/>
            <person name="Grimmond S.M."/>
            <person name="Teasdale R.D."/>
            <person name="Liu E.T."/>
            <person name="Brusic V."/>
            <person name="Quackenbush J."/>
            <person name="Wahlestedt C."/>
            <person name="Mattick J.S."/>
            <person name="Hume D.A."/>
            <person name="Kai C."/>
            <person name="Sasaki D."/>
            <person name="Tomaru Y."/>
            <person name="Fukuda S."/>
            <person name="Kanamori-Katayama M."/>
            <person name="Suzuki M."/>
            <person name="Aoki J."/>
            <person name="Arakawa T."/>
            <person name="Iida J."/>
            <person name="Imamura K."/>
            <person name="Itoh M."/>
            <person name="Kato T."/>
            <person name="Kawaji H."/>
            <person name="Kawagashira N."/>
            <person name="Kawashima T."/>
            <person name="Kojima M."/>
            <person name="Kondo S."/>
            <person name="Konno H."/>
            <person name="Nakano K."/>
            <person name="Ninomiya N."/>
            <person name="Nishio T."/>
            <person name="Okada M."/>
            <person name="Plessy C."/>
            <person name="Shibata K."/>
            <person name="Shiraki T."/>
            <person name="Suzuki S."/>
            <person name="Tagami M."/>
            <person name="Waki K."/>
            <person name="Watahiki A."/>
            <person name="Okamura-Oho Y."/>
            <person name="Suzuki H."/>
            <person name="Kawai J."/>
            <person name="Hayashizaki Y."/>
        </authorList>
    </citation>
    <scope>NUCLEOTIDE SEQUENCE [LARGE SCALE MRNA]</scope>
    <source>
        <strain>C57BL/6J</strain>
        <tissue>Lung</tissue>
        <tissue>Wolffian duct</tissue>
    </source>
</reference>
<reference key="2">
    <citation type="journal article" date="2009" name="PLoS Biol.">
        <title>Lineage-specific biology revealed by a finished genome assembly of the mouse.</title>
        <authorList>
            <person name="Church D.M."/>
            <person name="Goodstadt L."/>
            <person name="Hillier L.W."/>
            <person name="Zody M.C."/>
            <person name="Goldstein S."/>
            <person name="She X."/>
            <person name="Bult C.J."/>
            <person name="Agarwala R."/>
            <person name="Cherry J.L."/>
            <person name="DiCuccio M."/>
            <person name="Hlavina W."/>
            <person name="Kapustin Y."/>
            <person name="Meric P."/>
            <person name="Maglott D."/>
            <person name="Birtle Z."/>
            <person name="Marques A.C."/>
            <person name="Graves T."/>
            <person name="Zhou S."/>
            <person name="Teague B."/>
            <person name="Potamousis K."/>
            <person name="Churas C."/>
            <person name="Place M."/>
            <person name="Herschleb J."/>
            <person name="Runnheim R."/>
            <person name="Forrest D."/>
            <person name="Amos-Landgraf J."/>
            <person name="Schwartz D.C."/>
            <person name="Cheng Z."/>
            <person name="Lindblad-Toh K."/>
            <person name="Eichler E.E."/>
            <person name="Ponting C.P."/>
        </authorList>
    </citation>
    <scope>NUCLEOTIDE SEQUENCE [LARGE SCALE GENOMIC DNA]</scope>
    <source>
        <strain>C57BL/6J</strain>
    </source>
</reference>
<reference key="3">
    <citation type="submission" date="2005-07" db="EMBL/GenBank/DDBJ databases">
        <authorList>
            <person name="Mural R.J."/>
            <person name="Adams M.D."/>
            <person name="Myers E.W."/>
            <person name="Smith H.O."/>
            <person name="Venter J.C."/>
        </authorList>
    </citation>
    <scope>NUCLEOTIDE SEQUENCE [LARGE SCALE GENOMIC DNA]</scope>
</reference>
<reference key="4">
    <citation type="journal article" date="2004" name="Genome Res.">
        <title>The status, quality, and expansion of the NIH full-length cDNA project: the Mammalian Gene Collection (MGC).</title>
        <authorList>
            <consortium name="The MGC Project Team"/>
        </authorList>
    </citation>
    <scope>NUCLEOTIDE SEQUENCE [LARGE SCALE MRNA]</scope>
    <source>
        <strain>FVB/N</strain>
        <tissue>Kidney</tissue>
        <tissue>Mammary gland</tissue>
    </source>
</reference>
<evidence type="ECO:0000250" key="1">
    <source>
        <dbReference type="UniProtKB" id="Q9Y5Z9"/>
    </source>
</evidence>
<evidence type="ECO:0000255" key="2"/>
<evidence type="ECO:0000305" key="3"/>
<sequence length="336" mass="36684">MAAVQAPGEKINILAGETAKVGDPQKNEWPEQDRLPERSWRHKCASYVLALRPWSFSASLTPVALGSALAYRSQGVLDPRLLLGCAVAVLAVHGAGNLVNTYYDFSKGIDHKKSDDRTLVDRILEPQDVVRFGVFLYTLGCVCAACLYYLSALKLEHLALIYFGGLSGSFLYTGGIGFKYVALGDLVILITFGPLAVMFAYAVQVGSLAIFPLIYAIPLALSTEAILHSNNTRDMESDREAGIVTLAILIGPTFSYVLYNTLLFVPYLIFTILATHCSISLALPLLTIPMAFSLERQFRSQAFNKLPQRTAKLNLLLGLFYVFGIILAPAGSLPRL</sequence>
<feature type="initiator methionine" description="Removed" evidence="1">
    <location>
        <position position="1"/>
    </location>
</feature>
<feature type="chain" id="PRO_0000242628" description="UbiA prenyltransferase domain-containing protein 1">
    <location>
        <begin position="2"/>
        <end position="336"/>
    </location>
</feature>
<feature type="transmembrane region" description="Helical" evidence="2">
    <location>
        <begin position="81"/>
        <end position="101"/>
    </location>
</feature>
<feature type="transmembrane region" description="Helical" evidence="2">
    <location>
        <begin position="132"/>
        <end position="152"/>
    </location>
</feature>
<feature type="transmembrane region" description="Helical" evidence="2">
    <location>
        <begin position="158"/>
        <end position="178"/>
    </location>
</feature>
<feature type="transmembrane region" description="Helical" evidence="2">
    <location>
        <begin position="186"/>
        <end position="206"/>
    </location>
</feature>
<feature type="transmembrane region" description="Helical" evidence="2">
    <location>
        <begin position="207"/>
        <end position="227"/>
    </location>
</feature>
<feature type="transmembrane region" description="Helical" evidence="2">
    <location>
        <begin position="243"/>
        <end position="265"/>
    </location>
</feature>
<feature type="transmembrane region" description="Helical" evidence="2">
    <location>
        <begin position="275"/>
        <end position="295"/>
    </location>
</feature>
<feature type="transmembrane region" description="Helical" evidence="2">
    <location>
        <begin position="313"/>
        <end position="333"/>
    </location>
</feature>
<feature type="modified residue" description="N-acetylalanine" evidence="1">
    <location>
        <position position="2"/>
    </location>
</feature>
<feature type="sequence conflict" description="In Ref. 2; CAQ51620, 3; EDL14817 and 4; AAH71203." evidence="3" ref="2 3 4">
    <original>L</original>
    <variation>F</variation>
    <location>
        <position position="35"/>
    </location>
</feature>
<dbReference type="EC" id="2.5.1.-" evidence="1"/>
<dbReference type="EC" id="2.5.1.39" evidence="1"/>
<dbReference type="EMBL" id="AK004550">
    <property type="protein sequence ID" value="BAB23364.1"/>
    <property type="molecule type" value="mRNA"/>
</dbReference>
<dbReference type="EMBL" id="AK078442">
    <property type="protein sequence ID" value="BAC37276.2"/>
    <property type="molecule type" value="mRNA"/>
</dbReference>
<dbReference type="EMBL" id="AL731654">
    <property type="protein sequence ID" value="CAM22523.1"/>
    <property type="molecule type" value="Genomic_DNA"/>
</dbReference>
<dbReference type="EMBL" id="CU210865">
    <property type="protein sequence ID" value="CAQ51620.1"/>
    <property type="molecule type" value="Genomic_DNA"/>
</dbReference>
<dbReference type="EMBL" id="CH466594">
    <property type="protein sequence ID" value="EDL14817.1"/>
    <property type="molecule type" value="Genomic_DNA"/>
</dbReference>
<dbReference type="EMBL" id="BC015303">
    <property type="protein sequence ID" value="AAH15303.1"/>
    <property type="molecule type" value="mRNA"/>
</dbReference>
<dbReference type="EMBL" id="BC071203">
    <property type="protein sequence ID" value="AAH71203.1"/>
    <property type="molecule type" value="mRNA"/>
</dbReference>
<dbReference type="CCDS" id="CCDS18936.1"/>
<dbReference type="RefSeq" id="NP_082149.1">
    <property type="nucleotide sequence ID" value="NM_027873.3"/>
</dbReference>
<dbReference type="SMR" id="Q9DC60"/>
<dbReference type="BioGRID" id="214870">
    <property type="interactions" value="1"/>
</dbReference>
<dbReference type="FunCoup" id="Q9DC60">
    <property type="interactions" value="3237"/>
</dbReference>
<dbReference type="STRING" id="10090.ENSMUSP00000058502"/>
<dbReference type="iPTMnet" id="Q9DC60"/>
<dbReference type="PhosphoSitePlus" id="Q9DC60"/>
<dbReference type="PaxDb" id="10090-ENSMUSP00000058502"/>
<dbReference type="ProteomicsDB" id="298089"/>
<dbReference type="Pumba" id="Q9DC60"/>
<dbReference type="Antibodypedia" id="13750">
    <property type="antibodies" value="113 antibodies from 24 providers"/>
</dbReference>
<dbReference type="Ensembl" id="ENSMUST00000051633.3">
    <property type="protein sequence ID" value="ENSMUSP00000058502.3"/>
    <property type="gene ID" value="ENSMUSG00000047719.3"/>
</dbReference>
<dbReference type="GeneID" id="71707"/>
<dbReference type="KEGG" id="mmu:71707"/>
<dbReference type="UCSC" id="uc008vup.1">
    <property type="organism name" value="mouse"/>
</dbReference>
<dbReference type="AGR" id="MGI:1918957"/>
<dbReference type="CTD" id="29914"/>
<dbReference type="MGI" id="MGI:1918957">
    <property type="gene designation" value="Ubiad1"/>
</dbReference>
<dbReference type="VEuPathDB" id="HostDB:ENSMUSG00000047719"/>
<dbReference type="eggNOG" id="KOG4581">
    <property type="taxonomic scope" value="Eukaryota"/>
</dbReference>
<dbReference type="GeneTree" id="ENSGT00390000012439"/>
<dbReference type="HOGENOM" id="CLU_043611_0_0_1"/>
<dbReference type="InParanoid" id="Q9DC60"/>
<dbReference type="OMA" id="QWIEGAR"/>
<dbReference type="OrthoDB" id="203513at2759"/>
<dbReference type="PhylomeDB" id="Q9DC60"/>
<dbReference type="TreeFam" id="TF323238"/>
<dbReference type="Reactome" id="R-MMU-6806664">
    <property type="pathway name" value="Metabolism of vitamin K"/>
</dbReference>
<dbReference type="UniPathway" id="UPA00079"/>
<dbReference type="UniPathway" id="UPA00232"/>
<dbReference type="BioGRID-ORCS" id="71707">
    <property type="hits" value="5 hits in 78 CRISPR screens"/>
</dbReference>
<dbReference type="ChiTaRS" id="Ubiad1">
    <property type="organism name" value="mouse"/>
</dbReference>
<dbReference type="PRO" id="PR:Q9DC60"/>
<dbReference type="Proteomes" id="UP000000589">
    <property type="component" value="Chromosome 4"/>
</dbReference>
<dbReference type="RNAct" id="Q9DC60">
    <property type="molecule type" value="protein"/>
</dbReference>
<dbReference type="Bgee" id="ENSMUSG00000047719">
    <property type="expression patterns" value="Expressed in animal zygote and 212 other cell types or tissues"/>
</dbReference>
<dbReference type="GO" id="GO:0005783">
    <property type="term" value="C:endoplasmic reticulum"/>
    <property type="evidence" value="ECO:0000250"/>
    <property type="project" value="UniProtKB"/>
</dbReference>
<dbReference type="GO" id="GO:0005789">
    <property type="term" value="C:endoplasmic reticulum membrane"/>
    <property type="evidence" value="ECO:0000314"/>
    <property type="project" value="MGI"/>
</dbReference>
<dbReference type="GO" id="GO:0000139">
    <property type="term" value="C:Golgi membrane"/>
    <property type="evidence" value="ECO:0000250"/>
    <property type="project" value="UniProtKB"/>
</dbReference>
<dbReference type="GO" id="GO:0031966">
    <property type="term" value="C:mitochondrial membrane"/>
    <property type="evidence" value="ECO:0007669"/>
    <property type="project" value="UniProtKB-SubCell"/>
</dbReference>
<dbReference type="GO" id="GO:0005634">
    <property type="term" value="C:nucleus"/>
    <property type="evidence" value="ECO:0007669"/>
    <property type="project" value="Ensembl"/>
</dbReference>
<dbReference type="GO" id="GO:0016209">
    <property type="term" value="F:antioxidant activity"/>
    <property type="evidence" value="ECO:0000250"/>
    <property type="project" value="UniProtKB"/>
</dbReference>
<dbReference type="GO" id="GO:0004659">
    <property type="term" value="F:prenyltransferase activity"/>
    <property type="evidence" value="ECO:0000315"/>
    <property type="project" value="MGI"/>
</dbReference>
<dbReference type="GO" id="GO:0072359">
    <property type="term" value="P:circulatory system development"/>
    <property type="evidence" value="ECO:0000250"/>
    <property type="project" value="UniProtKB"/>
</dbReference>
<dbReference type="GO" id="GO:0001885">
    <property type="term" value="P:endothelial cell development"/>
    <property type="evidence" value="ECO:0000250"/>
    <property type="project" value="UniProtKB"/>
</dbReference>
<dbReference type="GO" id="GO:0009234">
    <property type="term" value="P:menaquinone biosynthetic process"/>
    <property type="evidence" value="ECO:0000250"/>
    <property type="project" value="UniProtKB"/>
</dbReference>
<dbReference type="GO" id="GO:0009233">
    <property type="term" value="P:menaquinone metabolic process"/>
    <property type="evidence" value="ECO:0000315"/>
    <property type="project" value="MGI"/>
</dbReference>
<dbReference type="GO" id="GO:0042374">
    <property type="term" value="P:phylloquinone metabolic process"/>
    <property type="evidence" value="ECO:0000315"/>
    <property type="project" value="MGI"/>
</dbReference>
<dbReference type="GO" id="GO:0006744">
    <property type="term" value="P:ubiquinone biosynthetic process"/>
    <property type="evidence" value="ECO:0000250"/>
    <property type="project" value="UniProtKB"/>
</dbReference>
<dbReference type="GO" id="GO:0042371">
    <property type="term" value="P:vitamin K biosynthetic process"/>
    <property type="evidence" value="ECO:0000250"/>
    <property type="project" value="UniProtKB"/>
</dbReference>
<dbReference type="CDD" id="cd13962">
    <property type="entry name" value="PT_UbiA_UBIAD1"/>
    <property type="match status" value="1"/>
</dbReference>
<dbReference type="FunFam" id="1.10.357.140:FF:000005">
    <property type="entry name" value="UbiA prenyltransferase domain-containing protein 1"/>
    <property type="match status" value="1"/>
</dbReference>
<dbReference type="Gene3D" id="1.10.357.140">
    <property type="entry name" value="UbiA prenyltransferase"/>
    <property type="match status" value="1"/>
</dbReference>
<dbReference type="InterPro" id="IPR000537">
    <property type="entry name" value="UbiA_prenyltransferase"/>
</dbReference>
<dbReference type="InterPro" id="IPR044878">
    <property type="entry name" value="UbiA_sf"/>
</dbReference>
<dbReference type="InterPro" id="IPR026046">
    <property type="entry name" value="UBIAD1"/>
</dbReference>
<dbReference type="PANTHER" id="PTHR13929">
    <property type="entry name" value="1,4-DIHYDROXY-2-NAPHTHOATE OCTAPRENYLTRANSFERASE"/>
    <property type="match status" value="1"/>
</dbReference>
<dbReference type="PANTHER" id="PTHR13929:SF0">
    <property type="entry name" value="UBIA PRENYLTRANSFERASE DOMAIN-CONTAINING PROTEIN 1"/>
    <property type="match status" value="1"/>
</dbReference>
<dbReference type="Pfam" id="PF01040">
    <property type="entry name" value="UbiA"/>
    <property type="match status" value="1"/>
</dbReference>
<dbReference type="PIRSF" id="PIRSF005355">
    <property type="entry name" value="UBIAD1"/>
    <property type="match status" value="1"/>
</dbReference>
<keyword id="KW-0007">Acetylation</keyword>
<keyword id="KW-0256">Endoplasmic reticulum</keyword>
<keyword id="KW-0333">Golgi apparatus</keyword>
<keyword id="KW-0472">Membrane</keyword>
<keyword id="KW-0474">Menaquinone biosynthesis</keyword>
<keyword id="KW-0496">Mitochondrion</keyword>
<keyword id="KW-0637">Prenyltransferase</keyword>
<keyword id="KW-1185">Reference proteome</keyword>
<keyword id="KW-0808">Transferase</keyword>
<keyword id="KW-0812">Transmembrane</keyword>
<keyword id="KW-1133">Transmembrane helix</keyword>
<keyword id="KW-0831">Ubiquinone biosynthesis</keyword>
<gene>
    <name type="primary">Ubiad1</name>
</gene>
<comment type="function">
    <text evidence="1">Prenyltransferase that mediates the formation of menaquinone-4 (MK-4) and coenzyme Q10. MK-4 is a vitamin K2 isoform required for endothelial cell development. Mediates the conversion of phylloquinone (PK) into MK-4, probably by cleaving the side chain of phylloquinone (PK) to release 2-methyl-1,4-naphthoquinone (menadione; K3) and then prenylating it with geranylgeranyl pyrophosphate (GGPP) to form MK-4. Also plays a role in cardiovascular development independently of MK-4 biosynthesis, by acting as a coenzyme Q10 biosynthetic enzyme: coenzyme Q10, also named ubiquinone, plays an important antioxidant role in the cardiovascular system. Mediates biosynthesis of coenzyme Q10 in the Golgi membrane, leading to protect cardiovascular tissues from NOS3/eNOS-dependent oxidative stress.</text>
</comment>
<comment type="catalytic activity">
    <reaction evidence="1">
        <text>menadiol + (2E,6E,10E)-geranylgeranyl diphosphate = menaquinol-4 + diphosphate</text>
        <dbReference type="Rhea" id="RHEA:74083"/>
        <dbReference type="ChEBI" id="CHEBI:6746"/>
        <dbReference type="ChEBI" id="CHEBI:33019"/>
        <dbReference type="ChEBI" id="CHEBI:58756"/>
        <dbReference type="ChEBI" id="CHEBI:193091"/>
    </reaction>
    <physiologicalReaction direction="left-to-right" evidence="1">
        <dbReference type="Rhea" id="RHEA:74084"/>
    </physiologicalReaction>
</comment>
<comment type="catalytic activity">
    <reaction evidence="1">
        <text>all-trans-decaprenyl diphosphate + 4-hydroxybenzoate = 4-hydroxy-3-(all-trans-decaprenyl)benzoate + diphosphate</text>
        <dbReference type="Rhea" id="RHEA:44564"/>
        <dbReference type="ChEBI" id="CHEBI:17879"/>
        <dbReference type="ChEBI" id="CHEBI:33019"/>
        <dbReference type="ChEBI" id="CHEBI:60721"/>
        <dbReference type="ChEBI" id="CHEBI:84503"/>
        <dbReference type="EC" id="2.5.1.39"/>
    </reaction>
    <physiologicalReaction direction="left-to-right" evidence="1">
        <dbReference type="Rhea" id="RHEA:44565"/>
    </physiologicalReaction>
</comment>
<comment type="pathway">
    <text evidence="1">Quinol/quinone metabolism; menaquinone biosynthesis.</text>
</comment>
<comment type="pathway">
    <text evidence="1">Cofactor biosynthesis; ubiquinone biosynthesis.</text>
</comment>
<comment type="subunit">
    <text evidence="1">Interacts with HMGCR and SOAT1.</text>
</comment>
<comment type="subcellular location">
    <subcellularLocation>
        <location evidence="1">Endoplasmic reticulum membrane</location>
        <topology evidence="2">Multi-pass membrane protein</topology>
    </subcellularLocation>
    <subcellularLocation>
        <location evidence="1">Golgi apparatus membrane</location>
        <topology evidence="2">Multi-pass membrane protein</topology>
    </subcellularLocation>
    <subcellularLocation>
        <location evidence="1">Mitochondrion membrane</location>
        <topology evidence="2">Multi-pass membrane protein</topology>
    </subcellularLocation>
</comment>
<comment type="similarity">
    <text evidence="3">Belongs to the UbiA prenyltransferase family.</text>
</comment>
<name>UBIA1_MOUSE</name>
<protein>
    <recommendedName>
        <fullName>UbiA prenyltransferase domain-containing protein 1</fullName>
        <ecNumber evidence="1">2.5.1.-</ecNumber>
        <ecNumber evidence="1">2.5.1.39</ecNumber>
    </recommendedName>
</protein>